<keyword id="KW-0028">Amino-acid biosynthesis</keyword>
<keyword id="KW-0057">Aromatic amino acid biosynthesis</keyword>
<keyword id="KW-0413">Isomerase</keyword>
<keyword id="KW-0822">Tryptophan biosynthesis</keyword>
<reference key="1">
    <citation type="journal article" date="2007" name="ISME J.">
        <title>Population level functional diversity in a microbial community revealed by comparative genomic and metagenomic analyses.</title>
        <authorList>
            <person name="Bhaya D."/>
            <person name="Grossman A.R."/>
            <person name="Steunou A.-S."/>
            <person name="Khuri N."/>
            <person name="Cohan F.M."/>
            <person name="Hamamura N."/>
            <person name="Melendrez M.C."/>
            <person name="Bateson M.M."/>
            <person name="Ward D.M."/>
            <person name="Heidelberg J.F."/>
        </authorList>
    </citation>
    <scope>NUCLEOTIDE SEQUENCE [LARGE SCALE GENOMIC DNA]</scope>
    <source>
        <strain>JA-3-3Ab</strain>
    </source>
</reference>
<name>TRPF_SYNJA</name>
<dbReference type="EC" id="5.3.1.24" evidence="1"/>
<dbReference type="EMBL" id="CP000239">
    <property type="protein sequence ID" value="ABC98978.1"/>
    <property type="molecule type" value="Genomic_DNA"/>
</dbReference>
<dbReference type="SMR" id="Q2JW90"/>
<dbReference type="STRING" id="321327.CYA_0771"/>
<dbReference type="KEGG" id="cya:CYA_0771"/>
<dbReference type="eggNOG" id="COG0135">
    <property type="taxonomic scope" value="Bacteria"/>
</dbReference>
<dbReference type="HOGENOM" id="CLU_076364_2_0_3"/>
<dbReference type="OrthoDB" id="9786954at2"/>
<dbReference type="UniPathway" id="UPA00035">
    <property type="reaction ID" value="UER00042"/>
</dbReference>
<dbReference type="Proteomes" id="UP000008818">
    <property type="component" value="Chromosome"/>
</dbReference>
<dbReference type="GO" id="GO:0004640">
    <property type="term" value="F:phosphoribosylanthranilate isomerase activity"/>
    <property type="evidence" value="ECO:0007669"/>
    <property type="project" value="UniProtKB-UniRule"/>
</dbReference>
<dbReference type="GO" id="GO:0000162">
    <property type="term" value="P:L-tryptophan biosynthetic process"/>
    <property type="evidence" value="ECO:0007669"/>
    <property type="project" value="UniProtKB-UniRule"/>
</dbReference>
<dbReference type="CDD" id="cd00405">
    <property type="entry name" value="PRAI"/>
    <property type="match status" value="1"/>
</dbReference>
<dbReference type="Gene3D" id="3.20.20.70">
    <property type="entry name" value="Aldolase class I"/>
    <property type="match status" value="1"/>
</dbReference>
<dbReference type="HAMAP" id="MF_00135">
    <property type="entry name" value="PRAI"/>
    <property type="match status" value="1"/>
</dbReference>
<dbReference type="InterPro" id="IPR013785">
    <property type="entry name" value="Aldolase_TIM"/>
</dbReference>
<dbReference type="InterPro" id="IPR001240">
    <property type="entry name" value="PRAI_dom"/>
</dbReference>
<dbReference type="InterPro" id="IPR011060">
    <property type="entry name" value="RibuloseP-bd_barrel"/>
</dbReference>
<dbReference type="InterPro" id="IPR044643">
    <property type="entry name" value="TrpF_fam"/>
</dbReference>
<dbReference type="NCBIfam" id="NF002298">
    <property type="entry name" value="PRK01222.1-4"/>
    <property type="match status" value="1"/>
</dbReference>
<dbReference type="PANTHER" id="PTHR42894">
    <property type="entry name" value="N-(5'-PHOSPHORIBOSYL)ANTHRANILATE ISOMERASE"/>
    <property type="match status" value="1"/>
</dbReference>
<dbReference type="PANTHER" id="PTHR42894:SF1">
    <property type="entry name" value="N-(5'-PHOSPHORIBOSYL)ANTHRANILATE ISOMERASE"/>
    <property type="match status" value="1"/>
</dbReference>
<dbReference type="Pfam" id="PF00697">
    <property type="entry name" value="PRAI"/>
    <property type="match status" value="1"/>
</dbReference>
<dbReference type="SUPFAM" id="SSF51366">
    <property type="entry name" value="Ribulose-phoshate binding barrel"/>
    <property type="match status" value="1"/>
</dbReference>
<gene>
    <name evidence="1" type="primary">trpF</name>
    <name type="ordered locus">CYA_0771</name>
</gene>
<feature type="chain" id="PRO_1000018642" description="N-(5'-phosphoribosyl)anthranilate isomerase">
    <location>
        <begin position="1"/>
        <end position="226"/>
    </location>
</feature>
<comment type="catalytic activity">
    <reaction evidence="1">
        <text>N-(5-phospho-beta-D-ribosyl)anthranilate = 1-(2-carboxyphenylamino)-1-deoxy-D-ribulose 5-phosphate</text>
        <dbReference type="Rhea" id="RHEA:21540"/>
        <dbReference type="ChEBI" id="CHEBI:18277"/>
        <dbReference type="ChEBI" id="CHEBI:58613"/>
        <dbReference type="EC" id="5.3.1.24"/>
    </reaction>
</comment>
<comment type="pathway">
    <text evidence="1">Amino-acid biosynthesis; L-tryptophan biosynthesis; L-tryptophan from chorismate: step 3/5.</text>
</comment>
<comment type="similarity">
    <text evidence="1">Belongs to the TrpF family.</text>
</comment>
<organism>
    <name type="scientific">Synechococcus sp. (strain JA-3-3Ab)</name>
    <name type="common">Cyanobacteria bacterium Yellowstone A-Prime</name>
    <dbReference type="NCBI Taxonomy" id="321327"/>
    <lineage>
        <taxon>Bacteria</taxon>
        <taxon>Bacillati</taxon>
        <taxon>Cyanobacteriota</taxon>
        <taxon>Cyanophyceae</taxon>
        <taxon>Synechococcales</taxon>
        <taxon>Synechococcaceae</taxon>
        <taxon>Synechococcus</taxon>
    </lineage>
</organism>
<sequence>MGRLFVKICGITRQDQAEAIAALGVSALGFIAVPNTPRYLPLSQARWLASLPRHVEKVGVFVDPDPRTIATWVEVGGLTAVQLHGRESPEECRQLGEWLPGIRRIKALRIRHLADLEAAHLYGDCVEALLLDAYHPQRAGGTGQTLNWPELAHRSLPLPWLLAGGLTPDNVLQALSHLQPSGIDLSSGVERQPGDKDLHKVWRLLQQLESQGWQIASALPQPNQGL</sequence>
<proteinExistence type="inferred from homology"/>
<evidence type="ECO:0000255" key="1">
    <source>
        <dbReference type="HAMAP-Rule" id="MF_00135"/>
    </source>
</evidence>
<protein>
    <recommendedName>
        <fullName evidence="1">N-(5'-phosphoribosyl)anthranilate isomerase</fullName>
        <shortName evidence="1">PRAI</shortName>
        <ecNumber evidence="1">5.3.1.24</ecNumber>
    </recommendedName>
</protein>
<accession>Q2JW90</accession>